<accession>P53925</accession>
<accession>B0KZS0</accession>
<accession>D6W167</accession>
<accession>Q6B2V3</accession>
<proteinExistence type="evidence at protein level"/>
<gene>
    <name type="ordered locus">YNL115C</name>
    <name type="ORF">N1929</name>
</gene>
<sequence length="644" mass="74039">MKANGLDNDPARTGMERTDIDSEHPEAQPLLNNNHRTLGAGSANGPAVNEGRDIESDGFIKDSLFQIRKGYRIFIHNSKWILNILILINTIWLVTTLISDFFFNINILFGFSNRYASFNDLTLIFISIIANSFNLWFNKLGLYSALDYSLNVTLCVLTLFNLALTYLIKYTRQRIGFVGTFTYLWTSFSFFIGAILDWYLLFYNNSINEPLEERRIDDANISTFNENHTNSTENRDRSQYGSGSPTPTHRSQLVQNKHTLTEWVSIGFRNTIKFLILIFFALFTLNTLLTTLDTYRLTHKLPITVQSPSYEAFHYVDAAKTYQLHITCYGDVFDQENNTDLSENKKQPIILFEHGGYDTGYLSATWIEELYHLDKIQRYCLYDRPGYGLSDSPPAPISIAMVAESLRYALIKDAKIKGPFTTVGYDLGGLFTRVFTAKNVDIVDSMMLVESWHEELLLKNYIQRLLPPGRGDGDDGDDGNGNDGDGRNHDKTWLPSEIERHNEFRLWWKGIWSSLGWRLQTSWLLAHHGSKERIYGRDMKYQGRFLRSKFLESVTSSILSYRDVTNNAESLQNVKTSIVSSKEMVKKSALWGDWQRDLTKISHKTQEWKIVEGGHEIYKYGLGKQQTQEVLLRLIGELGKLTED</sequence>
<organism>
    <name type="scientific">Saccharomyces cerevisiae (strain ATCC 204508 / S288c)</name>
    <name type="common">Baker's yeast</name>
    <dbReference type="NCBI Taxonomy" id="559292"/>
    <lineage>
        <taxon>Eukaryota</taxon>
        <taxon>Fungi</taxon>
        <taxon>Dikarya</taxon>
        <taxon>Ascomycota</taxon>
        <taxon>Saccharomycotina</taxon>
        <taxon>Saccharomycetes</taxon>
        <taxon>Saccharomycetales</taxon>
        <taxon>Saccharomycetaceae</taxon>
        <taxon>Saccharomyces</taxon>
    </lineage>
</organism>
<feature type="chain" id="PRO_0000203433" description="Uncharacterized vacuolar membrane protein YNL115C">
    <location>
        <begin position="1"/>
        <end position="644"/>
    </location>
</feature>
<feature type="topological domain" description="Cytoplasmic" evidence="1">
    <location>
        <begin position="1"/>
        <end position="90"/>
    </location>
</feature>
<feature type="transmembrane region" description="Helical" evidence="1">
    <location>
        <begin position="91"/>
        <end position="111"/>
    </location>
</feature>
<feature type="topological domain" description="Vacuolar" evidence="1">
    <location>
        <begin position="112"/>
        <end position="122"/>
    </location>
</feature>
<feature type="transmembrane region" description="Helical" evidence="1">
    <location>
        <begin position="123"/>
        <end position="143"/>
    </location>
</feature>
<feature type="topological domain" description="Cytoplasmic" evidence="1">
    <location>
        <begin position="144"/>
        <end position="147"/>
    </location>
</feature>
<feature type="transmembrane region" description="Helical" evidence="1">
    <location>
        <begin position="148"/>
        <end position="168"/>
    </location>
</feature>
<feature type="topological domain" description="Vacuolar" evidence="1">
    <location>
        <begin position="169"/>
        <end position="174"/>
    </location>
</feature>
<feature type="transmembrane region" description="Helical" evidence="1">
    <location>
        <begin position="175"/>
        <end position="195"/>
    </location>
</feature>
<feature type="topological domain" description="Cytoplasmic" evidence="1">
    <location>
        <begin position="196"/>
        <end position="271"/>
    </location>
</feature>
<feature type="transmembrane region" description="Helical" evidence="1">
    <location>
        <begin position="272"/>
        <end position="292"/>
    </location>
</feature>
<feature type="topological domain" description="Vacuolar" evidence="1">
    <location>
        <begin position="293"/>
        <end position="644"/>
    </location>
</feature>
<feature type="domain" description="AB hydrolase-1" evidence="1">
    <location>
        <begin position="348"/>
        <end position="619"/>
    </location>
</feature>
<feature type="region of interest" description="Disordered" evidence="2">
    <location>
        <begin position="1"/>
        <end position="35"/>
    </location>
</feature>
<feature type="region of interest" description="Disordered" evidence="2">
    <location>
        <begin position="225"/>
        <end position="251"/>
    </location>
</feature>
<feature type="region of interest" description="Disordered" evidence="2">
    <location>
        <begin position="469"/>
        <end position="492"/>
    </location>
</feature>
<feature type="compositionally biased region" description="Basic and acidic residues" evidence="2">
    <location>
        <begin position="14"/>
        <end position="26"/>
    </location>
</feature>
<feature type="compositionally biased region" description="Polar residues" evidence="2">
    <location>
        <begin position="239"/>
        <end position="251"/>
    </location>
</feature>
<feature type="modified residue" description="Phosphoserine" evidence="6">
    <location>
        <position position="22"/>
    </location>
</feature>
<feature type="modified residue" description="Phosphoserine" evidence="5 6">
    <location>
        <position position="56"/>
    </location>
</feature>
<feature type="modified residue" description="Phosphoserine" evidence="6">
    <location>
        <position position="63"/>
    </location>
</feature>
<feature type="modified residue" description="Phosphoserine" evidence="6">
    <location>
        <position position="244"/>
    </location>
</feature>
<feature type="sequence conflict" description="In Ref. 4; AAT92646." evidence="4" ref="4">
    <original>D</original>
    <variation>G</variation>
    <location>
        <position position="644"/>
    </location>
</feature>
<keyword id="KW-0472">Membrane</keyword>
<keyword id="KW-0597">Phosphoprotein</keyword>
<keyword id="KW-1185">Reference proteome</keyword>
<keyword id="KW-0812">Transmembrane</keyword>
<keyword id="KW-1133">Transmembrane helix</keyword>
<keyword id="KW-0926">Vacuole</keyword>
<reference key="1">
    <citation type="journal article" date="1997" name="Yeast">
        <title>The DNA sequence of cosmid 14-13b from chromosome XIV of Saccharomyces cerevisiae reveals an unusually high number of overlapping open reading frames.</title>
        <authorList>
            <person name="de Antoni A."/>
            <person name="D'Angelo M."/>
            <person name="Dal Pero F."/>
            <person name="Sartorello F."/>
            <person name="Pandolfo D."/>
            <person name="Pallavicini A."/>
            <person name="Lanfranchi G."/>
            <person name="Valle G."/>
        </authorList>
    </citation>
    <scope>NUCLEOTIDE SEQUENCE [GENOMIC DNA]</scope>
</reference>
<reference key="2">
    <citation type="journal article" date="1997" name="Nature">
        <title>The nucleotide sequence of Saccharomyces cerevisiae chromosome XIV and its evolutionary implications.</title>
        <authorList>
            <person name="Philippsen P."/>
            <person name="Kleine K."/>
            <person name="Poehlmann R."/>
            <person name="Duesterhoeft A."/>
            <person name="Hamberg K."/>
            <person name="Hegemann J.H."/>
            <person name="Obermaier B."/>
            <person name="Urrestarazu L.A."/>
            <person name="Aert R."/>
            <person name="Albermann K."/>
            <person name="Altmann R."/>
            <person name="Andre B."/>
            <person name="Baladron V."/>
            <person name="Ballesta J.P.G."/>
            <person name="Becam A.-M."/>
            <person name="Beinhauer J.D."/>
            <person name="Boskovic J."/>
            <person name="Buitrago M.J."/>
            <person name="Bussereau F."/>
            <person name="Coster F."/>
            <person name="Crouzet M."/>
            <person name="D'Angelo M."/>
            <person name="Dal Pero F."/>
            <person name="De Antoni A."/>
            <person name="del Rey F."/>
            <person name="Doignon F."/>
            <person name="Domdey H."/>
            <person name="Dubois E."/>
            <person name="Fiedler T.A."/>
            <person name="Fleig U."/>
            <person name="Floeth M."/>
            <person name="Fritz C."/>
            <person name="Gaillardin C."/>
            <person name="Garcia-Cantalejo J.M."/>
            <person name="Glansdorff N."/>
            <person name="Goffeau A."/>
            <person name="Gueldener U."/>
            <person name="Herbert C.J."/>
            <person name="Heumann K."/>
            <person name="Heuss-Neitzel D."/>
            <person name="Hilbert H."/>
            <person name="Hinni K."/>
            <person name="Iraqui Houssaini I."/>
            <person name="Jacquet M."/>
            <person name="Jimenez A."/>
            <person name="Jonniaux J.-L."/>
            <person name="Karpfinger-Hartl L."/>
            <person name="Lanfranchi G."/>
            <person name="Lepingle A."/>
            <person name="Levesque H."/>
            <person name="Lyck R."/>
            <person name="Maftahi M."/>
            <person name="Mallet L."/>
            <person name="Maurer C.T.C."/>
            <person name="Messenguy F."/>
            <person name="Mewes H.-W."/>
            <person name="Moestl D."/>
            <person name="Nasr F."/>
            <person name="Nicaud J.-M."/>
            <person name="Niedenthal R.K."/>
            <person name="Pandolfo D."/>
            <person name="Pierard A."/>
            <person name="Piravandi E."/>
            <person name="Planta R.J."/>
            <person name="Pohl T.M."/>
            <person name="Purnelle B."/>
            <person name="Rebischung C."/>
            <person name="Remacha M.A."/>
            <person name="Revuelta J.L."/>
            <person name="Rinke M."/>
            <person name="Saiz J.E."/>
            <person name="Sartorello F."/>
            <person name="Scherens B."/>
            <person name="Sen-Gupta M."/>
            <person name="Soler-Mira A."/>
            <person name="Urbanus J.H.M."/>
            <person name="Valle G."/>
            <person name="Van Dyck L."/>
            <person name="Verhasselt P."/>
            <person name="Vierendeels F."/>
            <person name="Vissers S."/>
            <person name="Voet M."/>
            <person name="Volckaert G."/>
            <person name="Wach A."/>
            <person name="Wambutt R."/>
            <person name="Wedler H."/>
            <person name="Zollner A."/>
            <person name="Hani J."/>
        </authorList>
    </citation>
    <scope>NUCLEOTIDE SEQUENCE [LARGE SCALE GENOMIC DNA]</scope>
    <source>
        <strain>ATCC 204508 / S288c</strain>
    </source>
</reference>
<reference key="3">
    <citation type="journal article" date="2014" name="G3 (Bethesda)">
        <title>The reference genome sequence of Saccharomyces cerevisiae: Then and now.</title>
        <authorList>
            <person name="Engel S.R."/>
            <person name="Dietrich F.S."/>
            <person name="Fisk D.G."/>
            <person name="Binkley G."/>
            <person name="Balakrishnan R."/>
            <person name="Costanzo M.C."/>
            <person name="Dwight S.S."/>
            <person name="Hitz B.C."/>
            <person name="Karra K."/>
            <person name="Nash R.S."/>
            <person name="Weng S."/>
            <person name="Wong E.D."/>
            <person name="Lloyd P."/>
            <person name="Skrzypek M.S."/>
            <person name="Miyasato S.R."/>
            <person name="Simison M."/>
            <person name="Cherry J.M."/>
        </authorList>
    </citation>
    <scope>GENOME REANNOTATION</scope>
    <source>
        <strain>ATCC 204508 / S288c</strain>
    </source>
</reference>
<reference key="4">
    <citation type="journal article" date="2007" name="Genome Res.">
        <title>Approaching a complete repository of sequence-verified protein-encoding clones for Saccharomyces cerevisiae.</title>
        <authorList>
            <person name="Hu Y."/>
            <person name="Rolfs A."/>
            <person name="Bhullar B."/>
            <person name="Murthy T.V.S."/>
            <person name="Zhu C."/>
            <person name="Berger M.F."/>
            <person name="Camargo A.A."/>
            <person name="Kelley F."/>
            <person name="McCarron S."/>
            <person name="Jepson D."/>
            <person name="Richardson A."/>
            <person name="Raphael J."/>
            <person name="Moreira D."/>
            <person name="Taycher E."/>
            <person name="Zuo D."/>
            <person name="Mohr S."/>
            <person name="Kane M.F."/>
            <person name="Williamson J."/>
            <person name="Simpson A.J.G."/>
            <person name="Bulyk M.L."/>
            <person name="Harlow E."/>
            <person name="Marsischky G."/>
            <person name="Kolodner R.D."/>
            <person name="LaBaer J."/>
        </authorList>
    </citation>
    <scope>NUCLEOTIDE SEQUENCE [GENOMIC DNA]</scope>
    <source>
        <strain>ATCC 204508 / S288c</strain>
    </source>
</reference>
<reference key="5">
    <citation type="journal article" date="2008" name="Genetics">
        <title>Sequential elimination of major-effect contributors identifies additional quantitative trait loci conditioning high-temperature growth in yeast.</title>
        <authorList>
            <person name="Sinha H."/>
            <person name="David L."/>
            <person name="Pascon R.C."/>
            <person name="Clauder-Muenster S."/>
            <person name="Krishnakumar S."/>
            <person name="Nguyen M."/>
            <person name="Shi G."/>
            <person name="Dean J."/>
            <person name="Davis R.W."/>
            <person name="Oefner P.J."/>
            <person name="McCusker J.H."/>
            <person name="Steinmetz L.M."/>
        </authorList>
    </citation>
    <scope>NUCLEOTIDE SEQUENCE [GENOMIC DNA] OF 352-644</scope>
    <source>
        <strain>ATCC 200060 / W303</strain>
        <strain>S103</strain>
        <strain>SK1</strain>
        <strain>V1-09</strain>
        <strain>YJM 1129</strain>
        <strain>YJM 269</strain>
        <strain>YJM 270</strain>
        <strain>YJM 320</strain>
        <strain>YJM 326</strain>
        <strain>YJM 339</strain>
        <strain>YJM 627</strain>
        <strain>YJM230</strain>
    </source>
</reference>
<reference key="6">
    <citation type="journal article" date="2003" name="Nature">
        <title>Global analysis of protein localization in budding yeast.</title>
        <authorList>
            <person name="Huh W.-K."/>
            <person name="Falvo J.V."/>
            <person name="Gerke L.C."/>
            <person name="Carroll A.S."/>
            <person name="Howson R.W."/>
            <person name="Weissman J.S."/>
            <person name="O'Shea E.K."/>
        </authorList>
    </citation>
    <scope>SUBCELLULAR LOCATION [LARGE SCALE ANALYSIS]</scope>
</reference>
<reference key="7">
    <citation type="journal article" date="2006" name="Proc. Natl. Acad. Sci. U.S.A.">
        <title>A global topology map of the Saccharomyces cerevisiae membrane proteome.</title>
        <authorList>
            <person name="Kim H."/>
            <person name="Melen K."/>
            <person name="Oesterberg M."/>
            <person name="von Heijne G."/>
        </authorList>
    </citation>
    <scope>TOPOLOGY [LARGE SCALE ANALYSIS]</scope>
    <source>
        <strain>ATCC 208353 / W303-1A</strain>
    </source>
</reference>
<reference key="8">
    <citation type="journal article" date="2008" name="Mol. Cell. Proteomics">
        <title>A multidimensional chromatography technology for in-depth phosphoproteome analysis.</title>
        <authorList>
            <person name="Albuquerque C.P."/>
            <person name="Smolka M.B."/>
            <person name="Payne S.H."/>
            <person name="Bafna V."/>
            <person name="Eng J."/>
            <person name="Zhou H."/>
        </authorList>
    </citation>
    <scope>PHOSPHORYLATION [LARGE SCALE ANALYSIS] AT SER-56</scope>
    <scope>IDENTIFICATION BY MASS SPECTROMETRY [LARGE SCALE ANALYSIS]</scope>
</reference>
<reference key="9">
    <citation type="journal article" date="2009" name="Science">
        <title>Global analysis of Cdk1 substrate phosphorylation sites provides insights into evolution.</title>
        <authorList>
            <person name="Holt L.J."/>
            <person name="Tuch B.B."/>
            <person name="Villen J."/>
            <person name="Johnson A.D."/>
            <person name="Gygi S.P."/>
            <person name="Morgan D.O."/>
        </authorList>
    </citation>
    <scope>PHOSPHORYLATION [LARGE SCALE ANALYSIS] AT SER-22; SER-56; SER-63 AND SER-244</scope>
    <scope>IDENTIFICATION BY MASS SPECTROMETRY [LARGE SCALE ANALYSIS]</scope>
</reference>
<reference key="10">
    <citation type="journal article" date="2012" name="Proc. Natl. Acad. Sci. U.S.A.">
        <title>N-terminal acetylome analyses and functional insights of the N-terminal acetyltransferase NatB.</title>
        <authorList>
            <person name="Van Damme P."/>
            <person name="Lasa M."/>
            <person name="Polevoda B."/>
            <person name="Gazquez C."/>
            <person name="Elosegui-Artola A."/>
            <person name="Kim D.S."/>
            <person name="De Juan-Pardo E."/>
            <person name="Demeyer K."/>
            <person name="Hole K."/>
            <person name="Larrea E."/>
            <person name="Timmerman E."/>
            <person name="Prieto J."/>
            <person name="Arnesen T."/>
            <person name="Sherman F."/>
            <person name="Gevaert K."/>
            <person name="Aldabe R."/>
        </authorList>
    </citation>
    <scope>IDENTIFICATION BY MASS SPECTROMETRY [LARGE SCALE ANALYSIS]</scope>
</reference>
<protein>
    <recommendedName>
        <fullName>Uncharacterized vacuolar membrane protein YNL115C</fullName>
    </recommendedName>
</protein>
<dbReference type="EMBL" id="Z69382">
    <property type="protein sequence ID" value="CAA93392.1"/>
    <property type="molecule type" value="Genomic_DNA"/>
</dbReference>
<dbReference type="EMBL" id="Z71391">
    <property type="protein sequence ID" value="CAA95995.1"/>
    <property type="molecule type" value="Genomic_DNA"/>
</dbReference>
<dbReference type="EMBL" id="AY692627">
    <property type="protein sequence ID" value="AAT92646.1"/>
    <property type="molecule type" value="Genomic_DNA"/>
</dbReference>
<dbReference type="EMBL" id="EF125216">
    <property type="protein sequence ID" value="ABN58542.1"/>
    <property type="molecule type" value="Genomic_DNA"/>
</dbReference>
<dbReference type="EMBL" id="EF125217">
    <property type="protein sequence ID" value="ABN58551.1"/>
    <property type="molecule type" value="Genomic_DNA"/>
</dbReference>
<dbReference type="EMBL" id="EF125218">
    <property type="protein sequence ID" value="ABN58560.1"/>
    <property type="molecule type" value="Genomic_DNA"/>
</dbReference>
<dbReference type="EMBL" id="EF125219">
    <property type="protein sequence ID" value="ABN58569.1"/>
    <property type="molecule type" value="Genomic_DNA"/>
</dbReference>
<dbReference type="EMBL" id="EF125220">
    <property type="protein sequence ID" value="ABN58577.1"/>
    <property type="molecule type" value="Genomic_DNA"/>
</dbReference>
<dbReference type="EMBL" id="EF125221">
    <property type="protein sequence ID" value="ABN58587.1"/>
    <property type="molecule type" value="Genomic_DNA"/>
</dbReference>
<dbReference type="EMBL" id="EF125222">
    <property type="protein sequence ID" value="ABN58596.1"/>
    <property type="molecule type" value="Genomic_DNA"/>
</dbReference>
<dbReference type="EMBL" id="EF125223">
    <property type="protein sequence ID" value="ABN58605.1"/>
    <property type="molecule type" value="Genomic_DNA"/>
</dbReference>
<dbReference type="EMBL" id="EF125224">
    <property type="protein sequence ID" value="ABN58614.1"/>
    <property type="molecule type" value="Genomic_DNA"/>
</dbReference>
<dbReference type="EMBL" id="EF125225">
    <property type="protein sequence ID" value="ABN58623.1"/>
    <property type="molecule type" value="Genomic_DNA"/>
</dbReference>
<dbReference type="EMBL" id="EF125226">
    <property type="protein sequence ID" value="ABN58632.1"/>
    <property type="molecule type" value="Genomic_DNA"/>
</dbReference>
<dbReference type="EMBL" id="EF125228">
    <property type="protein sequence ID" value="ABN58650.1"/>
    <property type="molecule type" value="Genomic_DNA"/>
</dbReference>
<dbReference type="EMBL" id="BK006947">
    <property type="protein sequence ID" value="DAA10433.1"/>
    <property type="molecule type" value="Genomic_DNA"/>
</dbReference>
<dbReference type="PIR" id="S63056">
    <property type="entry name" value="S63056"/>
</dbReference>
<dbReference type="RefSeq" id="NP_014284.1">
    <property type="nucleotide sequence ID" value="NM_001182953.1"/>
</dbReference>
<dbReference type="SMR" id="P53925"/>
<dbReference type="BioGRID" id="35711">
    <property type="interactions" value="92"/>
</dbReference>
<dbReference type="FunCoup" id="P53925">
    <property type="interactions" value="93"/>
</dbReference>
<dbReference type="IntAct" id="P53925">
    <property type="interactions" value="6"/>
</dbReference>
<dbReference type="STRING" id="4932.YNL115C"/>
<dbReference type="ESTHER" id="yeast-ynl5">
    <property type="family name" value="6_AlphaBeta_hydrolase"/>
</dbReference>
<dbReference type="GlyGen" id="P53925">
    <property type="glycosylation" value="1 site"/>
</dbReference>
<dbReference type="iPTMnet" id="P53925"/>
<dbReference type="PaxDb" id="4932-YNL115C"/>
<dbReference type="PeptideAtlas" id="P53925"/>
<dbReference type="EnsemblFungi" id="YNL115C_mRNA">
    <property type="protein sequence ID" value="YNL115C"/>
    <property type="gene ID" value="YNL115C"/>
</dbReference>
<dbReference type="GeneID" id="855608"/>
<dbReference type="KEGG" id="sce:YNL115C"/>
<dbReference type="AGR" id="SGD:S000005059"/>
<dbReference type="SGD" id="S000005059">
    <property type="gene designation" value="YNL115C"/>
</dbReference>
<dbReference type="VEuPathDB" id="FungiDB:YNL115C"/>
<dbReference type="eggNOG" id="ENOG502QQW9">
    <property type="taxonomic scope" value="Eukaryota"/>
</dbReference>
<dbReference type="HOGENOM" id="CLU_028296_0_0_1"/>
<dbReference type="InParanoid" id="P53925"/>
<dbReference type="OMA" id="WGKWQRE"/>
<dbReference type="OrthoDB" id="164921at2759"/>
<dbReference type="BioCyc" id="YEAST:G3O-33138-MONOMER"/>
<dbReference type="BioGRID-ORCS" id="855608">
    <property type="hits" value="0 hits in 10 CRISPR screens"/>
</dbReference>
<dbReference type="PRO" id="PR:P53925"/>
<dbReference type="Proteomes" id="UP000002311">
    <property type="component" value="Chromosome XIV"/>
</dbReference>
<dbReference type="RNAct" id="P53925">
    <property type="molecule type" value="protein"/>
</dbReference>
<dbReference type="GO" id="GO:0000324">
    <property type="term" value="C:fungal-type vacuole"/>
    <property type="evidence" value="ECO:0007005"/>
    <property type="project" value="SGD"/>
</dbReference>
<dbReference type="GO" id="GO:0000329">
    <property type="term" value="C:fungal-type vacuole membrane"/>
    <property type="evidence" value="ECO:0007005"/>
    <property type="project" value="SGD"/>
</dbReference>
<dbReference type="GO" id="GO:0003824">
    <property type="term" value="F:catalytic activity"/>
    <property type="evidence" value="ECO:0007669"/>
    <property type="project" value="UniProtKB-ARBA"/>
</dbReference>
<dbReference type="Gene3D" id="3.40.50.1820">
    <property type="entry name" value="alpha/beta hydrolase"/>
    <property type="match status" value="1"/>
</dbReference>
<dbReference type="InterPro" id="IPR000073">
    <property type="entry name" value="AB_hydrolase_1"/>
</dbReference>
<dbReference type="InterPro" id="IPR029058">
    <property type="entry name" value="AB_hydrolase_fold"/>
</dbReference>
<dbReference type="InterPro" id="IPR019431">
    <property type="entry name" value="DUF2417"/>
</dbReference>
<dbReference type="InterPro" id="IPR052370">
    <property type="entry name" value="Meta-cleavage_hydrolase"/>
</dbReference>
<dbReference type="PANTHER" id="PTHR43139">
    <property type="entry name" value="SI:DKEY-122A22.2"/>
    <property type="match status" value="1"/>
</dbReference>
<dbReference type="PANTHER" id="PTHR43139:SF52">
    <property type="entry name" value="SI:DKEY-122A22.2"/>
    <property type="match status" value="1"/>
</dbReference>
<dbReference type="Pfam" id="PF00561">
    <property type="entry name" value="Abhydrolase_1"/>
    <property type="match status" value="1"/>
</dbReference>
<dbReference type="Pfam" id="PF10329">
    <property type="entry name" value="DUF2417"/>
    <property type="match status" value="1"/>
</dbReference>
<dbReference type="SUPFAM" id="SSF53474">
    <property type="entry name" value="alpha/beta-Hydrolases"/>
    <property type="match status" value="1"/>
</dbReference>
<comment type="subcellular location">
    <subcellularLocation>
        <location evidence="3">Vacuole membrane</location>
        <topology evidence="3">Multi-pass membrane protein</topology>
    </subcellularLocation>
</comment>
<name>YNL5_YEAST</name>
<evidence type="ECO:0000255" key="1"/>
<evidence type="ECO:0000256" key="2">
    <source>
        <dbReference type="SAM" id="MobiDB-lite"/>
    </source>
</evidence>
<evidence type="ECO:0000269" key="3">
    <source>
    </source>
</evidence>
<evidence type="ECO:0000305" key="4"/>
<evidence type="ECO:0007744" key="5">
    <source>
    </source>
</evidence>
<evidence type="ECO:0007744" key="6">
    <source>
    </source>
</evidence>